<evidence type="ECO:0000255" key="1">
    <source>
        <dbReference type="HAMAP-Rule" id="MF_01396"/>
    </source>
</evidence>
<organism>
    <name type="scientific">Syntrophotalea carbinolica (strain DSM 2380 / NBRC 103641 / GraBd1)</name>
    <name type="common">Pelobacter carbinolicus</name>
    <dbReference type="NCBI Taxonomy" id="338963"/>
    <lineage>
        <taxon>Bacteria</taxon>
        <taxon>Pseudomonadati</taxon>
        <taxon>Thermodesulfobacteriota</taxon>
        <taxon>Desulfuromonadia</taxon>
        <taxon>Desulfuromonadales</taxon>
        <taxon>Syntrophotaleaceae</taxon>
        <taxon>Syntrophotalea</taxon>
    </lineage>
</organism>
<sequence length="88" mass="9198">MDFFSWVMITAGFGMAIGSLGTGIGQGLAVKSALEGVARNPGASGKILTTMMIGLAMIESLAIYVFVVAMIILFANPFQDVVLELLAK</sequence>
<keyword id="KW-0066">ATP synthesis</keyword>
<keyword id="KW-0997">Cell inner membrane</keyword>
<keyword id="KW-1003">Cell membrane</keyword>
<keyword id="KW-0138">CF(0)</keyword>
<keyword id="KW-0375">Hydrogen ion transport</keyword>
<keyword id="KW-0406">Ion transport</keyword>
<keyword id="KW-0446">Lipid-binding</keyword>
<keyword id="KW-0472">Membrane</keyword>
<keyword id="KW-1185">Reference proteome</keyword>
<keyword id="KW-0812">Transmembrane</keyword>
<keyword id="KW-1133">Transmembrane helix</keyword>
<keyword id="KW-0813">Transport</keyword>
<proteinExistence type="inferred from homology"/>
<accession>Q3A602</accession>
<comment type="function">
    <text evidence="1">F(1)F(0) ATP synthase produces ATP from ADP in the presence of a proton or sodium gradient. F-type ATPases consist of two structural domains, F(1) containing the extramembraneous catalytic core and F(0) containing the membrane proton channel, linked together by a central stalk and a peripheral stalk. During catalysis, ATP synthesis in the catalytic domain of F(1) is coupled via a rotary mechanism of the central stalk subunits to proton translocation.</text>
</comment>
<comment type="function">
    <text evidence="1">Key component of the F(0) channel; it plays a direct role in translocation across the membrane. A homomeric c-ring of between 10-14 subunits forms the central stalk rotor element with the F(1) delta and epsilon subunits.</text>
</comment>
<comment type="subunit">
    <text evidence="1">F-type ATPases have 2 components, F(1) - the catalytic core - and F(0) - the membrane proton channel. F(1) has five subunits: alpha(3), beta(3), gamma(1), delta(1), epsilon(1). F(0) has three main subunits: a(1), b(2) and c(10-14). The alpha and beta chains form an alternating ring which encloses part of the gamma chain. F(1) is attached to F(0) by a central stalk formed by the gamma and epsilon chains, while a peripheral stalk is formed by the delta and b chains.</text>
</comment>
<comment type="subcellular location">
    <subcellularLocation>
        <location evidence="1">Cell inner membrane</location>
        <topology evidence="1">Multi-pass membrane protein</topology>
    </subcellularLocation>
</comment>
<comment type="similarity">
    <text evidence="1">Belongs to the ATPase C chain family.</text>
</comment>
<dbReference type="EMBL" id="CP000142">
    <property type="protein sequence ID" value="ABA88205.1"/>
    <property type="molecule type" value="Genomic_DNA"/>
</dbReference>
<dbReference type="RefSeq" id="WP_011340676.1">
    <property type="nucleotide sequence ID" value="NC_007498.2"/>
</dbReference>
<dbReference type="SMR" id="Q3A602"/>
<dbReference type="STRING" id="338963.Pcar_0952"/>
<dbReference type="KEGG" id="pca:Pcar_0952"/>
<dbReference type="eggNOG" id="COG0636">
    <property type="taxonomic scope" value="Bacteria"/>
</dbReference>
<dbReference type="HOGENOM" id="CLU_148047_2_0_7"/>
<dbReference type="OrthoDB" id="5296711at2"/>
<dbReference type="Proteomes" id="UP000002534">
    <property type="component" value="Chromosome"/>
</dbReference>
<dbReference type="GO" id="GO:0005886">
    <property type="term" value="C:plasma membrane"/>
    <property type="evidence" value="ECO:0007669"/>
    <property type="project" value="UniProtKB-SubCell"/>
</dbReference>
<dbReference type="GO" id="GO:0045259">
    <property type="term" value="C:proton-transporting ATP synthase complex"/>
    <property type="evidence" value="ECO:0007669"/>
    <property type="project" value="UniProtKB-KW"/>
</dbReference>
<dbReference type="GO" id="GO:0033177">
    <property type="term" value="C:proton-transporting two-sector ATPase complex, proton-transporting domain"/>
    <property type="evidence" value="ECO:0007669"/>
    <property type="project" value="InterPro"/>
</dbReference>
<dbReference type="GO" id="GO:0008289">
    <property type="term" value="F:lipid binding"/>
    <property type="evidence" value="ECO:0007669"/>
    <property type="project" value="UniProtKB-KW"/>
</dbReference>
<dbReference type="GO" id="GO:0046933">
    <property type="term" value="F:proton-transporting ATP synthase activity, rotational mechanism"/>
    <property type="evidence" value="ECO:0007669"/>
    <property type="project" value="UniProtKB-UniRule"/>
</dbReference>
<dbReference type="CDD" id="cd18121">
    <property type="entry name" value="ATP-synt_Fo_c"/>
    <property type="match status" value="1"/>
</dbReference>
<dbReference type="Gene3D" id="1.20.120.610">
    <property type="entry name" value="lithium bound rotor ring of v- atpase"/>
    <property type="match status" value="1"/>
</dbReference>
<dbReference type="HAMAP" id="MF_01396">
    <property type="entry name" value="ATP_synth_c_bact"/>
    <property type="match status" value="1"/>
</dbReference>
<dbReference type="InterPro" id="IPR005953">
    <property type="entry name" value="ATP_synth_csu_bac/chlpt"/>
</dbReference>
<dbReference type="InterPro" id="IPR000454">
    <property type="entry name" value="ATP_synth_F0_csu"/>
</dbReference>
<dbReference type="InterPro" id="IPR020537">
    <property type="entry name" value="ATP_synth_F0_csu_DDCD_BS"/>
</dbReference>
<dbReference type="InterPro" id="IPR002379">
    <property type="entry name" value="ATPase_proteolipid_c-like_dom"/>
</dbReference>
<dbReference type="InterPro" id="IPR035921">
    <property type="entry name" value="F/V-ATP_Csub_sf"/>
</dbReference>
<dbReference type="NCBIfam" id="TIGR01260">
    <property type="entry name" value="ATP_synt_c"/>
    <property type="match status" value="1"/>
</dbReference>
<dbReference type="PANTHER" id="PTHR10031">
    <property type="entry name" value="ATP SYNTHASE LIPID-BINDING PROTEIN, MITOCHONDRIAL"/>
    <property type="match status" value="1"/>
</dbReference>
<dbReference type="PANTHER" id="PTHR10031:SF0">
    <property type="entry name" value="ATPASE PROTEIN 9"/>
    <property type="match status" value="1"/>
</dbReference>
<dbReference type="Pfam" id="PF00137">
    <property type="entry name" value="ATP-synt_C"/>
    <property type="match status" value="1"/>
</dbReference>
<dbReference type="PRINTS" id="PR00124">
    <property type="entry name" value="ATPASEC"/>
</dbReference>
<dbReference type="SUPFAM" id="SSF81333">
    <property type="entry name" value="F1F0 ATP synthase subunit C"/>
    <property type="match status" value="1"/>
</dbReference>
<dbReference type="PROSITE" id="PS00605">
    <property type="entry name" value="ATPASE_C"/>
    <property type="match status" value="1"/>
</dbReference>
<gene>
    <name evidence="1" type="primary">atpE2</name>
    <name type="ordered locus">Pcar_0952</name>
</gene>
<protein>
    <recommendedName>
        <fullName evidence="1">ATP synthase subunit c 2</fullName>
    </recommendedName>
    <alternativeName>
        <fullName evidence="1">ATP synthase F(0) sector subunit c 2</fullName>
    </alternativeName>
    <alternativeName>
        <fullName evidence="1">F-type ATPase subunit c 2</fullName>
        <shortName evidence="1">F-ATPase subunit c 2</shortName>
    </alternativeName>
    <alternativeName>
        <fullName evidence="1">Lipid-binding protein 2</fullName>
    </alternativeName>
</protein>
<reference key="1">
    <citation type="submission" date="2005-10" db="EMBL/GenBank/DDBJ databases">
        <title>Complete sequence of Pelobacter carbinolicus DSM 2380.</title>
        <authorList>
            <person name="Copeland A."/>
            <person name="Lucas S."/>
            <person name="Lapidus A."/>
            <person name="Barry K."/>
            <person name="Detter J.C."/>
            <person name="Glavina T."/>
            <person name="Hammon N."/>
            <person name="Israni S."/>
            <person name="Pitluck S."/>
            <person name="Chertkov O."/>
            <person name="Schmutz J."/>
            <person name="Larimer F."/>
            <person name="Land M."/>
            <person name="Kyrpides N."/>
            <person name="Ivanova N."/>
            <person name="Richardson P."/>
        </authorList>
    </citation>
    <scope>NUCLEOTIDE SEQUENCE [LARGE SCALE GENOMIC DNA]</scope>
    <source>
        <strain>DSM 2380 / NBRC 103641 / GraBd1</strain>
    </source>
</reference>
<feature type="chain" id="PRO_0000365908" description="ATP synthase subunit c 2">
    <location>
        <begin position="1"/>
        <end position="88"/>
    </location>
</feature>
<feature type="transmembrane region" description="Helical" evidence="1">
    <location>
        <begin position="4"/>
        <end position="24"/>
    </location>
</feature>
<feature type="transmembrane region" description="Helical" evidence="1">
    <location>
        <begin position="53"/>
        <end position="73"/>
    </location>
</feature>
<feature type="site" description="Reversibly protonated during proton transport" evidence="1">
    <location>
        <position position="59"/>
    </location>
</feature>
<name>ATPL2_SYNC1</name>